<proteinExistence type="inferred from homology"/>
<dbReference type="EC" id="2.1.1.245" evidence="1"/>
<dbReference type="EMBL" id="AF173830">
    <property type="protein sequence ID" value="AAG53714.1"/>
    <property type="molecule type" value="Genomic_DNA"/>
</dbReference>
<dbReference type="SMR" id="Q9C4Z0"/>
<dbReference type="UniPathway" id="UPA00642"/>
<dbReference type="GO" id="GO:0051539">
    <property type="term" value="F:4 iron, 4 sulfur cluster binding"/>
    <property type="evidence" value="ECO:0007669"/>
    <property type="project" value="UniProtKB-KW"/>
</dbReference>
<dbReference type="GO" id="GO:0043885">
    <property type="term" value="F:anaerobic carbon-monoxide dehydrogenase activity"/>
    <property type="evidence" value="ECO:0000314"/>
    <property type="project" value="MENGO"/>
</dbReference>
<dbReference type="GO" id="GO:0005506">
    <property type="term" value="F:iron ion binding"/>
    <property type="evidence" value="ECO:0007669"/>
    <property type="project" value="UniProtKB-UniRule"/>
</dbReference>
<dbReference type="GO" id="GO:0008168">
    <property type="term" value="F:methyltransferase activity"/>
    <property type="evidence" value="ECO:0007669"/>
    <property type="project" value="UniProtKB-UniRule"/>
</dbReference>
<dbReference type="GO" id="GO:0046356">
    <property type="term" value="P:acetyl-CoA catabolic process"/>
    <property type="evidence" value="ECO:0007669"/>
    <property type="project" value="InterPro"/>
</dbReference>
<dbReference type="GO" id="GO:0019385">
    <property type="term" value="P:methanogenesis, from acetate"/>
    <property type="evidence" value="ECO:0007669"/>
    <property type="project" value="UniProtKB-UniRule"/>
</dbReference>
<dbReference type="GO" id="GO:0032259">
    <property type="term" value="P:methylation"/>
    <property type="evidence" value="ECO:0007669"/>
    <property type="project" value="UniProtKB-KW"/>
</dbReference>
<dbReference type="FunFam" id="3.40.50.11600:FF:000001">
    <property type="entry name" value="Acetyl-CoA decarbonylase/synthase complex subunit gamma"/>
    <property type="match status" value="1"/>
</dbReference>
<dbReference type="Gene3D" id="3.40.50.11600">
    <property type="match status" value="1"/>
</dbReference>
<dbReference type="Gene3D" id="3.20.20.20">
    <property type="entry name" value="Dihydropteroate synthase-like"/>
    <property type="match status" value="1"/>
</dbReference>
<dbReference type="HAMAP" id="MF_01136">
    <property type="entry name" value="CdhE"/>
    <property type="match status" value="1"/>
</dbReference>
<dbReference type="InterPro" id="IPR007202">
    <property type="entry name" value="4Fe-4S_dom"/>
</dbReference>
<dbReference type="InterPro" id="IPR016041">
    <property type="entry name" value="Ac-CoA_synth_d_su_TIM-brl"/>
</dbReference>
<dbReference type="InterPro" id="IPR051069">
    <property type="entry name" value="ACDS_complex_subunit"/>
</dbReference>
<dbReference type="InterPro" id="IPR016218">
    <property type="entry name" value="AcylCoA_decarb/synth_gsu"/>
</dbReference>
<dbReference type="InterPro" id="IPR023427">
    <property type="entry name" value="AcylCoA_decarb/synth_gsu_arc"/>
</dbReference>
<dbReference type="InterPro" id="IPR011005">
    <property type="entry name" value="Dihydropteroate_synth-like_sf"/>
</dbReference>
<dbReference type="NCBIfam" id="NF003195">
    <property type="entry name" value="PRK04165.1"/>
    <property type="match status" value="1"/>
</dbReference>
<dbReference type="PANTHER" id="PTHR36214">
    <property type="match status" value="1"/>
</dbReference>
<dbReference type="PANTHER" id="PTHR36214:SF3">
    <property type="entry name" value="ACETYL-COA DECARBONYLASE_SYNTHASE COMPLEX SUBUNIT GAMMA"/>
    <property type="match status" value="1"/>
</dbReference>
<dbReference type="Pfam" id="PF03599">
    <property type="entry name" value="CdhD"/>
    <property type="match status" value="1"/>
</dbReference>
<dbReference type="Pfam" id="PF04060">
    <property type="entry name" value="FeS"/>
    <property type="match status" value="1"/>
</dbReference>
<dbReference type="PIRSF" id="PIRSF000376">
    <property type="entry name" value="AcCoA_decarb_gamma"/>
    <property type="match status" value="1"/>
</dbReference>
<dbReference type="SUPFAM" id="SSF51717">
    <property type="entry name" value="Dihydropteroate synthetase-like"/>
    <property type="match status" value="1"/>
</dbReference>
<dbReference type="PROSITE" id="PS51656">
    <property type="entry name" value="4FE4S"/>
    <property type="match status" value="1"/>
</dbReference>
<protein>
    <recommendedName>
        <fullName evidence="1">Acetyl-CoA decarbonylase/synthase complex subunit gamma 2</fullName>
        <shortName evidence="1">ACDS complex subunit gamma 2</shortName>
        <ecNumber evidence="1">2.1.1.245</ecNumber>
    </recommendedName>
    <alternativeName>
        <fullName evidence="1">5-methyltetrahydrosarcinapterin:corrinoid/iron-sulfur protein Co-methyltransferase 2</fullName>
    </alternativeName>
    <alternativeName>
        <fullName evidence="1">ACDS complex methyltransferase 2</fullName>
    </alternativeName>
    <alternativeName>
        <fullName evidence="1">Corrinoid/iron-sulfur component large subunit 2</fullName>
    </alternativeName>
</protein>
<organism>
    <name type="scientific">Methanosarcina thermophila</name>
    <dbReference type="NCBI Taxonomy" id="2210"/>
    <lineage>
        <taxon>Archaea</taxon>
        <taxon>Methanobacteriati</taxon>
        <taxon>Methanobacteriota</taxon>
        <taxon>Stenosarchaea group</taxon>
        <taxon>Methanomicrobia</taxon>
        <taxon>Methanosarcinales</taxon>
        <taxon>Methanosarcinaceae</taxon>
        <taxon>Methanosarcina</taxon>
    </lineage>
</organism>
<evidence type="ECO:0000255" key="1">
    <source>
        <dbReference type="HAMAP-Rule" id="MF_01136"/>
    </source>
</evidence>
<evidence type="ECO:0000255" key="2">
    <source>
        <dbReference type="PROSITE-ProRule" id="PRU00989"/>
    </source>
</evidence>
<comment type="function">
    <text evidence="1">Part of a complex that catalyzes the reversible cleavage of acetyl-CoA, allowing growth on acetate as sole source of carbon and energy.</text>
</comment>
<comment type="catalytic activity">
    <reaction evidence="1">
        <text>5,6,7,8-tetrahydrosarcinapterin + methyl-Co(III)-[corrinoid Fe-S protein] = 5-methyltetrahydrosarcinapterin + Co(I)-[corrinoid Fe-S protein] + H(+)</text>
        <dbReference type="Rhea" id="RHEA:45196"/>
        <dbReference type="Rhea" id="RHEA-COMP:11110"/>
        <dbReference type="Rhea" id="RHEA-COMP:11111"/>
        <dbReference type="ChEBI" id="CHEBI:15378"/>
        <dbReference type="ChEBI" id="CHEBI:59924"/>
        <dbReference type="ChEBI" id="CHEBI:64267"/>
        <dbReference type="ChEBI" id="CHEBI:85033"/>
        <dbReference type="ChEBI" id="CHEBI:85035"/>
        <dbReference type="EC" id="2.1.1.245"/>
    </reaction>
</comment>
<comment type="cofactor">
    <cofactor evidence="1">
        <name>corrinoid</name>
        <dbReference type="ChEBI" id="CHEBI:33913"/>
    </cofactor>
</comment>
<comment type="cofactor">
    <cofactor evidence="1">
        <name>[4Fe-4S] cluster</name>
        <dbReference type="ChEBI" id="CHEBI:49883"/>
    </cofactor>
    <text evidence="1">Binds 1 [4Fe-4S] cluster.</text>
</comment>
<comment type="pathway">
    <text evidence="1">One-carbon metabolism; methanogenesis from acetate.</text>
</comment>
<comment type="subunit">
    <text evidence="1">Heterodimer of delta and gamma chains. The ACDS complex is made up of alpha, epsilon, beta, gamma and delta chains with a probable stoichiometry of (alpha(2)epsilon(2))(4)-beta(8)-(gamma(1)delta(1))(8).</text>
</comment>
<sequence length="468" mass="51242">MKINSPLEAYKYLPQTNCGECGEATCMAFASKLIDRSGKPTQCPPLVKEKKFAKKLAELERLLAPEIREITIGVGDRAVKIGGDDVLYRHKLTFFNKTKMFYDVTDTMDEAALLERTKKVADFRKFYVGRNLLLDGVAIRSVSNDPEKFAAAVKKVSEVGIPMILCSFNPAVLKAGLEVAKDKNPLIYAANKDNWKEVGELALEYNVPVVVSAFNDLDGLKTLAKTFAEAGIKDIVLDPGTYPSGQGLKDSFTNFLKIRRAGIMGDTEIAYPIMALPITAWMAGISDPVSAAYWETAMAAIFTIRYGDIMILHSLEPYATLPEVHLAETIYTDPRTPVAVDSKMYKVGEPDENSPVLFTTNFALTYYTVESDLSSNGITCWLLAVDTDGIGVEAAAAGGQLTADKVKDAFEKSGFDLKKDVTHNTVIIPGLAARLQGDLEDKLGARVLVGPMDSGRLPGWFEKNWPPK</sequence>
<gene>
    <name evidence="1" type="primary">cdhE2</name>
</gene>
<name>ACDG2_METTE</name>
<keyword id="KW-0004">4Fe-4S</keyword>
<keyword id="KW-0170">Cobalt</keyword>
<keyword id="KW-0408">Iron</keyword>
<keyword id="KW-0411">Iron-sulfur</keyword>
<keyword id="KW-0479">Metal-binding</keyword>
<keyword id="KW-0484">Methanogenesis</keyword>
<keyword id="KW-0489">Methyltransferase</keyword>
<keyword id="KW-0808">Transferase</keyword>
<feature type="chain" id="PRO_0000155125" description="Acetyl-CoA decarbonylase/synthase complex subunit gamma 2">
    <location>
        <begin position="1"/>
        <end position="468"/>
    </location>
</feature>
<feature type="domain" description="4Fe-4S" evidence="2">
    <location>
        <begin position="1"/>
        <end position="60"/>
    </location>
</feature>
<feature type="binding site" evidence="1">
    <location>
        <position position="18"/>
    </location>
    <ligand>
        <name>[4Fe-4S] cluster</name>
        <dbReference type="ChEBI" id="CHEBI:49883"/>
    </ligand>
</feature>
<feature type="binding site" evidence="1">
    <location>
        <position position="21"/>
    </location>
    <ligand>
        <name>[4Fe-4S] cluster</name>
        <dbReference type="ChEBI" id="CHEBI:49883"/>
    </ligand>
</feature>
<feature type="binding site" evidence="1">
    <location>
        <position position="26"/>
    </location>
    <ligand>
        <name>[4Fe-4S] cluster</name>
        <dbReference type="ChEBI" id="CHEBI:49883"/>
    </ligand>
</feature>
<feature type="binding site" evidence="1">
    <location>
        <position position="43"/>
    </location>
    <ligand>
        <name>[4Fe-4S] cluster</name>
        <dbReference type="ChEBI" id="CHEBI:49883"/>
    </ligand>
</feature>
<reference key="1">
    <citation type="journal article" date="2003" name="J. Biol. Chem.">
        <title>Nickel in subunit beta of the acetyl-CoA decarbonylase/synthase multienzyme complex in methanogens. Catalytic properties and evidence for a binuclear Ni-Ni site.</title>
        <authorList>
            <person name="Gencic S."/>
            <person name="Grahame D.A."/>
        </authorList>
    </citation>
    <scope>NUCLEOTIDE SEQUENCE [GENOMIC DNA]</scope>
    <source>
        <strain>ATCC 43570 / DSM 1825 / OCM 12 / TM-1</strain>
    </source>
</reference>
<accession>Q9C4Z0</accession>